<feature type="signal peptide" evidence="1">
    <location>
        <begin position="1"/>
        <end position="19"/>
    </location>
</feature>
<feature type="chain" id="PRO_0000315916" description="Lysozyme B">
    <location>
        <begin position="20"/>
        <end position="138"/>
    </location>
</feature>
<feature type="propeptide" id="PRO_0000315917" evidence="1">
    <location>
        <begin position="139"/>
        <end position="181"/>
    </location>
</feature>
<name>LYSB_DICDI</name>
<protein>
    <recommendedName>
        <fullName>Lysozyme B</fullName>
        <ecNumber>3.2.1.17</ecNumber>
    </recommendedName>
    <alternativeName>
        <fullName>1,4-beta-N-acetylmuramidase B</fullName>
    </alternativeName>
</protein>
<gene>
    <name type="primary">alyB</name>
    <name type="ORF">DDB_G0275119</name>
</gene>
<keyword id="KW-0044">Antibiotic</keyword>
<keyword id="KW-0929">Antimicrobial</keyword>
<keyword id="KW-0081">Bacteriolytic enzyme</keyword>
<keyword id="KW-0968">Cytoplasmic vesicle</keyword>
<keyword id="KW-1015">Disulfide bond</keyword>
<keyword id="KW-0326">Glycosidase</keyword>
<keyword id="KW-0378">Hydrolase</keyword>
<keyword id="KW-1185">Reference proteome</keyword>
<keyword id="KW-0732">Signal</keyword>
<comment type="function">
    <text evidence="1">Has antibacterial activity.</text>
</comment>
<comment type="catalytic activity">
    <reaction>
        <text>Hydrolysis of (1-&gt;4)-beta-linkages between N-acetylmuramic acid and N-acetyl-D-glucosamine residues in a peptidoglycan and between N-acetyl-D-glucosamine residues in chitodextrins.</text>
        <dbReference type="EC" id="3.2.1.17"/>
    </reaction>
</comment>
<comment type="subcellular location">
    <subcellularLocation>
        <location evidence="1">Cytoplasmic vesicle lumen</location>
    </subcellularLocation>
</comment>
<comment type="PTM">
    <text evidence="1">Contains six disulfide bonds.</text>
</comment>
<comment type="similarity">
    <text evidence="2">Belongs to the dictyostelium lysozyme family.</text>
</comment>
<accession>Q8T1G6</accession>
<accession>Q554H0</accession>
<organism>
    <name type="scientific">Dictyostelium discoideum</name>
    <name type="common">Social amoeba</name>
    <dbReference type="NCBI Taxonomy" id="44689"/>
    <lineage>
        <taxon>Eukaryota</taxon>
        <taxon>Amoebozoa</taxon>
        <taxon>Evosea</taxon>
        <taxon>Eumycetozoa</taxon>
        <taxon>Dictyostelia</taxon>
        <taxon>Dictyosteliales</taxon>
        <taxon>Dictyosteliaceae</taxon>
        <taxon>Dictyostelium</taxon>
    </lineage>
</organism>
<proteinExistence type="inferred from homology"/>
<dbReference type="EC" id="3.2.1.17"/>
<dbReference type="EMBL" id="AAFI02000013">
    <property type="protein sequence ID" value="EAL69840.1"/>
    <property type="molecule type" value="Genomic_DNA"/>
</dbReference>
<dbReference type="RefSeq" id="XP_643741.1">
    <property type="nucleotide sequence ID" value="XM_638649.1"/>
</dbReference>
<dbReference type="FunCoup" id="Q8T1G6">
    <property type="interactions" value="436"/>
</dbReference>
<dbReference type="STRING" id="44689.Q8T1G6"/>
<dbReference type="PaxDb" id="44689-DDB0231278"/>
<dbReference type="EnsemblProtists" id="EAL69840">
    <property type="protein sequence ID" value="EAL69840"/>
    <property type="gene ID" value="DDB_G0275119"/>
</dbReference>
<dbReference type="GeneID" id="8619785"/>
<dbReference type="KEGG" id="ddi:DDB_G0275119"/>
<dbReference type="dictyBase" id="DDB_G0275119">
    <property type="gene designation" value="alyB"/>
</dbReference>
<dbReference type="VEuPathDB" id="AmoebaDB:DDB_G0275119"/>
<dbReference type="eggNOG" id="ENOG502RCK0">
    <property type="taxonomic scope" value="Eukaryota"/>
</dbReference>
<dbReference type="HOGENOM" id="CLU_1491704_0_0_1"/>
<dbReference type="InParanoid" id="Q8T1G6"/>
<dbReference type="OMA" id="MWVEQNA"/>
<dbReference type="PhylomeDB" id="Q8T1G6"/>
<dbReference type="PRO" id="PR:Q8T1G6"/>
<dbReference type="Proteomes" id="UP000002195">
    <property type="component" value="Chromosome 2"/>
</dbReference>
<dbReference type="GO" id="GO:0031410">
    <property type="term" value="C:cytoplasmic vesicle"/>
    <property type="evidence" value="ECO:0000250"/>
    <property type="project" value="UniProtKB"/>
</dbReference>
<dbReference type="GO" id="GO:0060205">
    <property type="term" value="C:cytoplasmic vesicle lumen"/>
    <property type="evidence" value="ECO:0007669"/>
    <property type="project" value="UniProtKB-SubCell"/>
</dbReference>
<dbReference type="GO" id="GO:0031983">
    <property type="term" value="C:vesicle lumen"/>
    <property type="evidence" value="ECO:0000250"/>
    <property type="project" value="UniProtKB"/>
</dbReference>
<dbReference type="GO" id="GO:0003796">
    <property type="term" value="F:lysozyme activity"/>
    <property type="evidence" value="ECO:0000250"/>
    <property type="project" value="UniProtKB"/>
</dbReference>
<dbReference type="GO" id="GO:0050830">
    <property type="term" value="P:defense response to Gram-positive bacterium"/>
    <property type="evidence" value="ECO:0000250"/>
    <property type="project" value="UniProtKB"/>
</dbReference>
<dbReference type="GO" id="GO:0031640">
    <property type="term" value="P:killing of cells of another organism"/>
    <property type="evidence" value="ECO:0007669"/>
    <property type="project" value="UniProtKB-KW"/>
</dbReference>
<dbReference type="GO" id="GO:0009253">
    <property type="term" value="P:peptidoglycan catabolic process"/>
    <property type="evidence" value="ECO:0000305"/>
    <property type="project" value="dictyBase"/>
</dbReference>
<sequence length="181" mass="19535">MRISFFLLILAVIIGYAYGYSCPKPCYGNMCCSTSPGNKYYLTDFCGSTSACGPVPSCSGALYFTADSQRFGCGKHLNLCRGSKCVKAQIYDAGPAMWVEQDAGMMIIDASPTICHVLTGGSSCGWSDKFEITATVTSLTDSRPLGPFNVTEEEKAQLFIDHEIAMAQCEAEKTCNGFDLE</sequence>
<evidence type="ECO:0000250" key="1"/>
<evidence type="ECO:0000305" key="2"/>
<reference key="1">
    <citation type="journal article" date="2002" name="Nature">
        <title>Sequence and analysis of chromosome 2 of Dictyostelium discoideum.</title>
        <authorList>
            <person name="Gloeckner G."/>
            <person name="Eichinger L."/>
            <person name="Szafranski K."/>
            <person name="Pachebat J.A."/>
            <person name="Bankier A.T."/>
            <person name="Dear P.H."/>
            <person name="Lehmann R."/>
            <person name="Baumgart C."/>
            <person name="Parra G."/>
            <person name="Abril J.F."/>
            <person name="Guigo R."/>
            <person name="Kumpf K."/>
            <person name="Tunggal B."/>
            <person name="Cox E.C."/>
            <person name="Quail M.A."/>
            <person name="Platzer M."/>
            <person name="Rosenthal A."/>
            <person name="Noegel A.A."/>
        </authorList>
    </citation>
    <scope>NUCLEOTIDE SEQUENCE [LARGE SCALE GENOMIC DNA]</scope>
    <source>
        <strain>AX4</strain>
    </source>
</reference>
<reference key="2">
    <citation type="journal article" date="2005" name="Nature">
        <title>The genome of the social amoeba Dictyostelium discoideum.</title>
        <authorList>
            <person name="Eichinger L."/>
            <person name="Pachebat J.A."/>
            <person name="Gloeckner G."/>
            <person name="Rajandream M.A."/>
            <person name="Sucgang R."/>
            <person name="Berriman M."/>
            <person name="Song J."/>
            <person name="Olsen R."/>
            <person name="Szafranski K."/>
            <person name="Xu Q."/>
            <person name="Tunggal B."/>
            <person name="Kummerfeld S."/>
            <person name="Madera M."/>
            <person name="Konfortov B.A."/>
            <person name="Rivero F."/>
            <person name="Bankier A.T."/>
            <person name="Lehmann R."/>
            <person name="Hamlin N."/>
            <person name="Davies R."/>
            <person name="Gaudet P."/>
            <person name="Fey P."/>
            <person name="Pilcher K."/>
            <person name="Chen G."/>
            <person name="Saunders D."/>
            <person name="Sodergren E.J."/>
            <person name="Davis P."/>
            <person name="Kerhornou A."/>
            <person name="Nie X."/>
            <person name="Hall N."/>
            <person name="Anjard C."/>
            <person name="Hemphill L."/>
            <person name="Bason N."/>
            <person name="Farbrother P."/>
            <person name="Desany B."/>
            <person name="Just E."/>
            <person name="Morio T."/>
            <person name="Rost R."/>
            <person name="Churcher C.M."/>
            <person name="Cooper J."/>
            <person name="Haydock S."/>
            <person name="van Driessche N."/>
            <person name="Cronin A."/>
            <person name="Goodhead I."/>
            <person name="Muzny D.M."/>
            <person name="Mourier T."/>
            <person name="Pain A."/>
            <person name="Lu M."/>
            <person name="Harper D."/>
            <person name="Lindsay R."/>
            <person name="Hauser H."/>
            <person name="James K.D."/>
            <person name="Quiles M."/>
            <person name="Madan Babu M."/>
            <person name="Saito T."/>
            <person name="Buchrieser C."/>
            <person name="Wardroper A."/>
            <person name="Felder M."/>
            <person name="Thangavelu M."/>
            <person name="Johnson D."/>
            <person name="Knights A."/>
            <person name="Loulseged H."/>
            <person name="Mungall K.L."/>
            <person name="Oliver K."/>
            <person name="Price C."/>
            <person name="Quail M.A."/>
            <person name="Urushihara H."/>
            <person name="Hernandez J."/>
            <person name="Rabbinowitsch E."/>
            <person name="Steffen D."/>
            <person name="Sanders M."/>
            <person name="Ma J."/>
            <person name="Kohara Y."/>
            <person name="Sharp S."/>
            <person name="Simmonds M.N."/>
            <person name="Spiegler S."/>
            <person name="Tivey A."/>
            <person name="Sugano S."/>
            <person name="White B."/>
            <person name="Walker D."/>
            <person name="Woodward J.R."/>
            <person name="Winckler T."/>
            <person name="Tanaka Y."/>
            <person name="Shaulsky G."/>
            <person name="Schleicher M."/>
            <person name="Weinstock G.M."/>
            <person name="Rosenthal A."/>
            <person name="Cox E.C."/>
            <person name="Chisholm R.L."/>
            <person name="Gibbs R.A."/>
            <person name="Loomis W.F."/>
            <person name="Platzer M."/>
            <person name="Kay R.R."/>
            <person name="Williams J.G."/>
            <person name="Dear P.H."/>
            <person name="Noegel A.A."/>
            <person name="Barrell B.G."/>
            <person name="Kuspa A."/>
        </authorList>
    </citation>
    <scope>NUCLEOTIDE SEQUENCE [LARGE SCALE GENOMIC DNA]</scope>
    <source>
        <strain>AX4</strain>
    </source>
</reference>